<comment type="function">
    <text evidence="1">Digests double-stranded RNA. Involved in the processing of primary rRNA transcript to yield the immediate precursors to the large and small rRNAs (23S and 16S). Processes some mRNAs, and tRNAs when they are encoded in the rRNA operon. Processes pre-crRNA and tracrRNA of type II CRISPR loci if present in the organism.</text>
</comment>
<comment type="catalytic activity">
    <reaction evidence="1">
        <text>Endonucleolytic cleavage to 5'-phosphomonoester.</text>
        <dbReference type="EC" id="3.1.26.3"/>
    </reaction>
</comment>
<comment type="cofactor">
    <cofactor evidence="1">
        <name>Mg(2+)</name>
        <dbReference type="ChEBI" id="CHEBI:18420"/>
    </cofactor>
</comment>
<comment type="subunit">
    <text evidence="1">Homodimer.</text>
</comment>
<comment type="subcellular location">
    <subcellularLocation>
        <location evidence="1">Cytoplasm</location>
    </subcellularLocation>
</comment>
<comment type="similarity">
    <text evidence="1">Belongs to the ribonuclease III family.</text>
</comment>
<evidence type="ECO:0000255" key="1">
    <source>
        <dbReference type="HAMAP-Rule" id="MF_00104"/>
    </source>
</evidence>
<name>RNC_ENTFA</name>
<feature type="chain" id="PRO_0000228530" description="Ribonuclease 3">
    <location>
        <begin position="1"/>
        <end position="230"/>
    </location>
</feature>
<feature type="domain" description="RNase III" evidence="1">
    <location>
        <begin position="6"/>
        <end position="135"/>
    </location>
</feature>
<feature type="domain" description="DRBM" evidence="1">
    <location>
        <begin position="161"/>
        <end position="230"/>
    </location>
</feature>
<feature type="active site" evidence="1">
    <location>
        <position position="52"/>
    </location>
</feature>
<feature type="active site" evidence="1">
    <location>
        <position position="124"/>
    </location>
</feature>
<feature type="binding site" evidence="1">
    <location>
        <position position="48"/>
    </location>
    <ligand>
        <name>Mg(2+)</name>
        <dbReference type="ChEBI" id="CHEBI:18420"/>
    </ligand>
</feature>
<feature type="binding site" evidence="1">
    <location>
        <position position="121"/>
    </location>
    <ligand>
        <name>Mg(2+)</name>
        <dbReference type="ChEBI" id="CHEBI:18420"/>
    </ligand>
</feature>
<feature type="binding site" evidence="1">
    <location>
        <position position="124"/>
    </location>
    <ligand>
        <name>Mg(2+)</name>
        <dbReference type="ChEBI" id="CHEBI:18420"/>
    </ligand>
</feature>
<accession>Q82ZG1</accession>
<gene>
    <name evidence="1" type="primary">rnc</name>
    <name type="ordered locus">EF_3097</name>
</gene>
<reference key="1">
    <citation type="journal article" date="2003" name="Science">
        <title>Role of mobile DNA in the evolution of vancomycin-resistant Enterococcus faecalis.</title>
        <authorList>
            <person name="Paulsen I.T."/>
            <person name="Banerjei L."/>
            <person name="Myers G.S.A."/>
            <person name="Nelson K.E."/>
            <person name="Seshadri R."/>
            <person name="Read T.D."/>
            <person name="Fouts D.E."/>
            <person name="Eisen J.A."/>
            <person name="Gill S.R."/>
            <person name="Heidelberg J.F."/>
            <person name="Tettelin H."/>
            <person name="Dodson R.J."/>
            <person name="Umayam L.A."/>
            <person name="Brinkac L.M."/>
            <person name="Beanan M.J."/>
            <person name="Daugherty S.C."/>
            <person name="DeBoy R.T."/>
            <person name="Durkin S.A."/>
            <person name="Kolonay J.F."/>
            <person name="Madupu R."/>
            <person name="Nelson W.C."/>
            <person name="Vamathevan J.J."/>
            <person name="Tran B."/>
            <person name="Upton J."/>
            <person name="Hansen T."/>
            <person name="Shetty J."/>
            <person name="Khouri H.M."/>
            <person name="Utterback T.R."/>
            <person name="Radune D."/>
            <person name="Ketchum K.A."/>
            <person name="Dougherty B.A."/>
            <person name="Fraser C.M."/>
        </authorList>
    </citation>
    <scope>NUCLEOTIDE SEQUENCE [LARGE SCALE GENOMIC DNA]</scope>
    <source>
        <strain>ATCC 700802 / V583</strain>
    </source>
</reference>
<proteinExistence type="inferred from homology"/>
<protein>
    <recommendedName>
        <fullName evidence="1">Ribonuclease 3</fullName>
        <ecNumber evidence="1">3.1.26.3</ecNumber>
    </recommendedName>
    <alternativeName>
        <fullName evidence="1">Ribonuclease III</fullName>
        <shortName evidence="1">RNase III</shortName>
    </alternativeName>
</protein>
<dbReference type="EC" id="3.1.26.3" evidence="1"/>
<dbReference type="EMBL" id="AE016830">
    <property type="protein sequence ID" value="AAO82778.1"/>
    <property type="molecule type" value="Genomic_DNA"/>
</dbReference>
<dbReference type="RefSeq" id="NP_816708.1">
    <property type="nucleotide sequence ID" value="NC_004668.1"/>
</dbReference>
<dbReference type="RefSeq" id="WP_002354946.1">
    <property type="nucleotide sequence ID" value="NZ_KE136524.1"/>
</dbReference>
<dbReference type="SMR" id="Q82ZG1"/>
<dbReference type="STRING" id="226185.EF_3097"/>
<dbReference type="EnsemblBacteria" id="AAO82778">
    <property type="protein sequence ID" value="AAO82778"/>
    <property type="gene ID" value="EF_3097"/>
</dbReference>
<dbReference type="GeneID" id="60892348"/>
<dbReference type="KEGG" id="efa:EF3097"/>
<dbReference type="PATRIC" id="fig|226185.45.peg.475"/>
<dbReference type="eggNOG" id="COG0571">
    <property type="taxonomic scope" value="Bacteria"/>
</dbReference>
<dbReference type="HOGENOM" id="CLU_000907_1_3_9"/>
<dbReference type="PHI-base" id="PHI:11496"/>
<dbReference type="Proteomes" id="UP000001415">
    <property type="component" value="Chromosome"/>
</dbReference>
<dbReference type="GO" id="GO:0005737">
    <property type="term" value="C:cytoplasm"/>
    <property type="evidence" value="ECO:0007669"/>
    <property type="project" value="UniProtKB-SubCell"/>
</dbReference>
<dbReference type="GO" id="GO:0003725">
    <property type="term" value="F:double-stranded RNA binding"/>
    <property type="evidence" value="ECO:0007669"/>
    <property type="project" value="TreeGrafter"/>
</dbReference>
<dbReference type="GO" id="GO:0046872">
    <property type="term" value="F:metal ion binding"/>
    <property type="evidence" value="ECO:0007669"/>
    <property type="project" value="UniProtKB-KW"/>
</dbReference>
<dbReference type="GO" id="GO:0004525">
    <property type="term" value="F:ribonuclease III activity"/>
    <property type="evidence" value="ECO:0007669"/>
    <property type="project" value="UniProtKB-UniRule"/>
</dbReference>
<dbReference type="GO" id="GO:0019843">
    <property type="term" value="F:rRNA binding"/>
    <property type="evidence" value="ECO:0007669"/>
    <property type="project" value="UniProtKB-KW"/>
</dbReference>
<dbReference type="GO" id="GO:0006397">
    <property type="term" value="P:mRNA processing"/>
    <property type="evidence" value="ECO:0007669"/>
    <property type="project" value="UniProtKB-UniRule"/>
</dbReference>
<dbReference type="GO" id="GO:0010468">
    <property type="term" value="P:regulation of gene expression"/>
    <property type="evidence" value="ECO:0007669"/>
    <property type="project" value="TreeGrafter"/>
</dbReference>
<dbReference type="GO" id="GO:0006364">
    <property type="term" value="P:rRNA processing"/>
    <property type="evidence" value="ECO:0007669"/>
    <property type="project" value="UniProtKB-UniRule"/>
</dbReference>
<dbReference type="GO" id="GO:0008033">
    <property type="term" value="P:tRNA processing"/>
    <property type="evidence" value="ECO:0007669"/>
    <property type="project" value="UniProtKB-KW"/>
</dbReference>
<dbReference type="CDD" id="cd10845">
    <property type="entry name" value="DSRM_RNAse_III_family"/>
    <property type="match status" value="1"/>
</dbReference>
<dbReference type="CDD" id="cd00593">
    <property type="entry name" value="RIBOc"/>
    <property type="match status" value="1"/>
</dbReference>
<dbReference type="FunFam" id="1.10.1520.10:FF:000001">
    <property type="entry name" value="Ribonuclease 3"/>
    <property type="match status" value="1"/>
</dbReference>
<dbReference type="FunFam" id="3.30.160.20:FF:000003">
    <property type="entry name" value="Ribonuclease 3"/>
    <property type="match status" value="1"/>
</dbReference>
<dbReference type="Gene3D" id="3.30.160.20">
    <property type="match status" value="1"/>
</dbReference>
<dbReference type="Gene3D" id="1.10.1520.10">
    <property type="entry name" value="Ribonuclease III domain"/>
    <property type="match status" value="1"/>
</dbReference>
<dbReference type="HAMAP" id="MF_00104">
    <property type="entry name" value="RNase_III"/>
    <property type="match status" value="1"/>
</dbReference>
<dbReference type="InterPro" id="IPR014720">
    <property type="entry name" value="dsRBD_dom"/>
</dbReference>
<dbReference type="InterPro" id="IPR011907">
    <property type="entry name" value="RNase_III"/>
</dbReference>
<dbReference type="InterPro" id="IPR000999">
    <property type="entry name" value="RNase_III_dom"/>
</dbReference>
<dbReference type="InterPro" id="IPR036389">
    <property type="entry name" value="RNase_III_sf"/>
</dbReference>
<dbReference type="NCBIfam" id="TIGR02191">
    <property type="entry name" value="RNaseIII"/>
    <property type="match status" value="1"/>
</dbReference>
<dbReference type="PANTHER" id="PTHR11207:SF0">
    <property type="entry name" value="RIBONUCLEASE 3"/>
    <property type="match status" value="1"/>
</dbReference>
<dbReference type="PANTHER" id="PTHR11207">
    <property type="entry name" value="RIBONUCLEASE III"/>
    <property type="match status" value="1"/>
</dbReference>
<dbReference type="Pfam" id="PF00035">
    <property type="entry name" value="dsrm"/>
    <property type="match status" value="1"/>
</dbReference>
<dbReference type="Pfam" id="PF14622">
    <property type="entry name" value="Ribonucleas_3_3"/>
    <property type="match status" value="1"/>
</dbReference>
<dbReference type="SMART" id="SM00358">
    <property type="entry name" value="DSRM"/>
    <property type="match status" value="1"/>
</dbReference>
<dbReference type="SMART" id="SM00535">
    <property type="entry name" value="RIBOc"/>
    <property type="match status" value="1"/>
</dbReference>
<dbReference type="SUPFAM" id="SSF54768">
    <property type="entry name" value="dsRNA-binding domain-like"/>
    <property type="match status" value="1"/>
</dbReference>
<dbReference type="SUPFAM" id="SSF69065">
    <property type="entry name" value="RNase III domain-like"/>
    <property type="match status" value="1"/>
</dbReference>
<dbReference type="PROSITE" id="PS50137">
    <property type="entry name" value="DS_RBD"/>
    <property type="match status" value="1"/>
</dbReference>
<dbReference type="PROSITE" id="PS00517">
    <property type="entry name" value="RNASE_3_1"/>
    <property type="match status" value="1"/>
</dbReference>
<dbReference type="PROSITE" id="PS50142">
    <property type="entry name" value="RNASE_3_2"/>
    <property type="match status" value="1"/>
</dbReference>
<keyword id="KW-0963">Cytoplasm</keyword>
<keyword id="KW-0255">Endonuclease</keyword>
<keyword id="KW-0378">Hydrolase</keyword>
<keyword id="KW-0460">Magnesium</keyword>
<keyword id="KW-0479">Metal-binding</keyword>
<keyword id="KW-0507">mRNA processing</keyword>
<keyword id="KW-0540">Nuclease</keyword>
<keyword id="KW-1185">Reference proteome</keyword>
<keyword id="KW-0694">RNA-binding</keyword>
<keyword id="KW-0698">rRNA processing</keyword>
<keyword id="KW-0699">rRNA-binding</keyword>
<keyword id="KW-0819">tRNA processing</keyword>
<sequence>MDNQLTTELKERYGIVFHDVNLLEQAFTHSSYVNEHRYLKLSDNERLEFLGDAVLELIVSQYLYLKFPELPEGKLTKMRAAIVREDSLAKFAKECHFDNYILLGKGEEASGGRTRASLLCDLFEAFLGALYLDQKVGAAKKFIEDVIFPKIDAGAFSHEMDHKTQLQEVLQRKGDVSIEYRLIKEEGPAHDRTFFTEVYMNGELIGLGQGKSKKLAEQDAAERALKSIPQ</sequence>
<organism>
    <name type="scientific">Enterococcus faecalis (strain ATCC 700802 / V583)</name>
    <dbReference type="NCBI Taxonomy" id="226185"/>
    <lineage>
        <taxon>Bacteria</taxon>
        <taxon>Bacillati</taxon>
        <taxon>Bacillota</taxon>
        <taxon>Bacilli</taxon>
        <taxon>Lactobacillales</taxon>
        <taxon>Enterococcaceae</taxon>
        <taxon>Enterococcus</taxon>
    </lineage>
</organism>